<reference key="1">
    <citation type="submission" date="2008-08" db="EMBL/GenBank/DDBJ databases">
        <title>Complete sequence of Acidithiobacillus ferrooxidans ATCC 53993.</title>
        <authorList>
            <person name="Lucas S."/>
            <person name="Copeland A."/>
            <person name="Lapidus A."/>
            <person name="Glavina del Rio T."/>
            <person name="Dalin E."/>
            <person name="Tice H."/>
            <person name="Bruce D."/>
            <person name="Goodwin L."/>
            <person name="Pitluck S."/>
            <person name="Sims D."/>
            <person name="Brettin T."/>
            <person name="Detter J.C."/>
            <person name="Han C."/>
            <person name="Kuske C.R."/>
            <person name="Larimer F."/>
            <person name="Land M."/>
            <person name="Hauser L."/>
            <person name="Kyrpides N."/>
            <person name="Lykidis A."/>
            <person name="Borole A.P."/>
        </authorList>
    </citation>
    <scope>NUCLEOTIDE SEQUENCE [LARGE SCALE GENOMIC DNA]</scope>
    <source>
        <strain>ATCC 53993 / BNL-5-31</strain>
    </source>
</reference>
<evidence type="ECO:0000255" key="1">
    <source>
        <dbReference type="HAMAP-Rule" id="MF_00076"/>
    </source>
</evidence>
<protein>
    <recommendedName>
        <fullName evidence="1">Imidazoleglycerol-phosphate dehydratase</fullName>
        <shortName evidence="1">IGPD</shortName>
        <ecNumber evidence="1">4.2.1.19</ecNumber>
    </recommendedName>
</protein>
<sequence>MNPRQAEVERNTLETQIRVTLNLDGSGQADLHTGLPFLDHMIHQIVRHGLFDMHIQAQGDLDIDAHHTVEDIGIALGQAFARAVGDKAGIQRYGHAYVPLDEALSRVVVDLSGRPGLIFAVEFPRAQVGDFDVDLFHEFFQGFVNHAQVTLHLDTLRGSNTHHIAETLFKACGRALRMAVAPDPRMAGAVPSTKGTLTL</sequence>
<keyword id="KW-0028">Amino-acid biosynthesis</keyword>
<keyword id="KW-0963">Cytoplasm</keyword>
<keyword id="KW-0368">Histidine biosynthesis</keyword>
<keyword id="KW-0456">Lyase</keyword>
<organism>
    <name type="scientific">Acidithiobacillus ferrooxidans (strain ATCC 53993 / BNL-5-31)</name>
    <name type="common">Leptospirillum ferrooxidans (ATCC 53993)</name>
    <dbReference type="NCBI Taxonomy" id="380394"/>
    <lineage>
        <taxon>Bacteria</taxon>
        <taxon>Pseudomonadati</taxon>
        <taxon>Pseudomonadota</taxon>
        <taxon>Acidithiobacillia</taxon>
        <taxon>Acidithiobacillales</taxon>
        <taxon>Acidithiobacillaceae</taxon>
        <taxon>Acidithiobacillus</taxon>
    </lineage>
</organism>
<comment type="catalytic activity">
    <reaction evidence="1">
        <text>D-erythro-1-(imidazol-4-yl)glycerol 3-phosphate = 3-(imidazol-4-yl)-2-oxopropyl phosphate + H2O</text>
        <dbReference type="Rhea" id="RHEA:11040"/>
        <dbReference type="ChEBI" id="CHEBI:15377"/>
        <dbReference type="ChEBI" id="CHEBI:57766"/>
        <dbReference type="ChEBI" id="CHEBI:58278"/>
        <dbReference type="EC" id="4.2.1.19"/>
    </reaction>
</comment>
<comment type="pathway">
    <text evidence="1">Amino-acid biosynthesis; L-histidine biosynthesis; L-histidine from 5-phospho-alpha-D-ribose 1-diphosphate: step 6/9.</text>
</comment>
<comment type="subcellular location">
    <subcellularLocation>
        <location evidence="1">Cytoplasm</location>
    </subcellularLocation>
</comment>
<comment type="similarity">
    <text evidence="1">Belongs to the imidazoleglycerol-phosphate dehydratase family.</text>
</comment>
<name>HIS7_ACIF5</name>
<proteinExistence type="inferred from homology"/>
<accession>B5EQE9</accession>
<feature type="chain" id="PRO_1000092667" description="Imidazoleglycerol-phosphate dehydratase">
    <location>
        <begin position="1"/>
        <end position="199"/>
    </location>
</feature>
<gene>
    <name evidence="1" type="primary">hisB</name>
    <name type="ordered locus">Lferr_2652</name>
</gene>
<dbReference type="EC" id="4.2.1.19" evidence="1"/>
<dbReference type="EMBL" id="CP001132">
    <property type="protein sequence ID" value="ACH84846.1"/>
    <property type="molecule type" value="Genomic_DNA"/>
</dbReference>
<dbReference type="RefSeq" id="WP_012537565.1">
    <property type="nucleotide sequence ID" value="NC_011206.1"/>
</dbReference>
<dbReference type="SMR" id="B5EQE9"/>
<dbReference type="GeneID" id="65282045"/>
<dbReference type="KEGG" id="afe:Lferr_2652"/>
<dbReference type="eggNOG" id="COG0131">
    <property type="taxonomic scope" value="Bacteria"/>
</dbReference>
<dbReference type="HOGENOM" id="CLU_044308_3_0_6"/>
<dbReference type="UniPathway" id="UPA00031">
    <property type="reaction ID" value="UER00011"/>
</dbReference>
<dbReference type="GO" id="GO:0005737">
    <property type="term" value="C:cytoplasm"/>
    <property type="evidence" value="ECO:0007669"/>
    <property type="project" value="UniProtKB-SubCell"/>
</dbReference>
<dbReference type="GO" id="GO:0004424">
    <property type="term" value="F:imidazoleglycerol-phosphate dehydratase activity"/>
    <property type="evidence" value="ECO:0007669"/>
    <property type="project" value="UniProtKB-UniRule"/>
</dbReference>
<dbReference type="GO" id="GO:0000105">
    <property type="term" value="P:L-histidine biosynthetic process"/>
    <property type="evidence" value="ECO:0007669"/>
    <property type="project" value="UniProtKB-UniRule"/>
</dbReference>
<dbReference type="CDD" id="cd07914">
    <property type="entry name" value="IGPD"/>
    <property type="match status" value="1"/>
</dbReference>
<dbReference type="FunFam" id="3.30.230.40:FF:000001">
    <property type="entry name" value="Imidazoleglycerol-phosphate dehydratase HisB"/>
    <property type="match status" value="1"/>
</dbReference>
<dbReference type="FunFam" id="3.30.230.40:FF:000003">
    <property type="entry name" value="Imidazoleglycerol-phosphate dehydratase HisB"/>
    <property type="match status" value="1"/>
</dbReference>
<dbReference type="Gene3D" id="3.30.230.40">
    <property type="entry name" value="Imidazole glycerol phosphate dehydratase, domain 1"/>
    <property type="match status" value="2"/>
</dbReference>
<dbReference type="HAMAP" id="MF_00076">
    <property type="entry name" value="HisB"/>
    <property type="match status" value="1"/>
</dbReference>
<dbReference type="InterPro" id="IPR038494">
    <property type="entry name" value="IGPD_sf"/>
</dbReference>
<dbReference type="InterPro" id="IPR000807">
    <property type="entry name" value="ImidazoleglycerolP_deHydtase"/>
</dbReference>
<dbReference type="InterPro" id="IPR020565">
    <property type="entry name" value="ImidazoleglycerP_deHydtase_CS"/>
</dbReference>
<dbReference type="InterPro" id="IPR020568">
    <property type="entry name" value="Ribosomal_Su5_D2-typ_SF"/>
</dbReference>
<dbReference type="NCBIfam" id="NF002106">
    <property type="entry name" value="PRK00951.1-1"/>
    <property type="match status" value="1"/>
</dbReference>
<dbReference type="NCBIfam" id="NF002109">
    <property type="entry name" value="PRK00951.1-5"/>
    <property type="match status" value="1"/>
</dbReference>
<dbReference type="NCBIfam" id="NF002111">
    <property type="entry name" value="PRK00951.2-1"/>
    <property type="match status" value="1"/>
</dbReference>
<dbReference type="NCBIfam" id="NF002114">
    <property type="entry name" value="PRK00951.2-4"/>
    <property type="match status" value="1"/>
</dbReference>
<dbReference type="PANTHER" id="PTHR23133:SF2">
    <property type="entry name" value="IMIDAZOLEGLYCEROL-PHOSPHATE DEHYDRATASE"/>
    <property type="match status" value="1"/>
</dbReference>
<dbReference type="PANTHER" id="PTHR23133">
    <property type="entry name" value="IMIDAZOLEGLYCEROL-PHOSPHATE DEHYDRATASE HIS7"/>
    <property type="match status" value="1"/>
</dbReference>
<dbReference type="Pfam" id="PF00475">
    <property type="entry name" value="IGPD"/>
    <property type="match status" value="1"/>
</dbReference>
<dbReference type="SUPFAM" id="SSF54211">
    <property type="entry name" value="Ribosomal protein S5 domain 2-like"/>
    <property type="match status" value="2"/>
</dbReference>
<dbReference type="PROSITE" id="PS00954">
    <property type="entry name" value="IGP_DEHYDRATASE_1"/>
    <property type="match status" value="1"/>
</dbReference>
<dbReference type="PROSITE" id="PS00955">
    <property type="entry name" value="IGP_DEHYDRATASE_2"/>
    <property type="match status" value="1"/>
</dbReference>